<evidence type="ECO:0000250" key="1">
    <source>
        <dbReference type="UniProtKB" id="Q91ZE5"/>
    </source>
</evidence>
<evidence type="ECO:0000255" key="2"/>
<evidence type="ECO:0000255" key="3">
    <source>
        <dbReference type="PROSITE-ProRule" id="PRU00076"/>
    </source>
</evidence>
<evidence type="ECO:0000255" key="4">
    <source>
        <dbReference type="PROSITE-ProRule" id="PRU00098"/>
    </source>
</evidence>
<evidence type="ECO:0000303" key="5">
    <source>
    </source>
</evidence>
<evidence type="ECO:0000303" key="6">
    <source>
    </source>
</evidence>
<evidence type="ECO:0000305" key="7"/>
<evidence type="ECO:0000305" key="8">
    <source>
    </source>
</evidence>
<evidence type="ECO:0000305" key="9">
    <source>
    </source>
</evidence>
<evidence type="ECO:0000312" key="10">
    <source>
        <dbReference type="HGNC" id="HGNC:19240"/>
    </source>
</evidence>
<protein>
    <recommendedName>
        <fullName>Putative adhesion G protein-coupled receptor E4P</fullName>
    </recommendedName>
    <alternativeName>
        <fullName>EGF-like module receptor 4</fullName>
    </alternativeName>
    <alternativeName>
        <fullName>EGF-like module-containing mucin-like hormone receptor-like 4</fullName>
    </alternativeName>
    <alternativeName>
        <fullName>G-protein coupled receptor 127</fullName>
    </alternativeName>
    <alternativeName>
        <fullName>G-protein coupled receptor PGR16</fullName>
    </alternativeName>
</protein>
<organism>
    <name type="scientific">Homo sapiens</name>
    <name type="common">Human</name>
    <dbReference type="NCBI Taxonomy" id="9606"/>
    <lineage>
        <taxon>Eukaryota</taxon>
        <taxon>Metazoa</taxon>
        <taxon>Chordata</taxon>
        <taxon>Craniata</taxon>
        <taxon>Vertebrata</taxon>
        <taxon>Euteleostomi</taxon>
        <taxon>Mammalia</taxon>
        <taxon>Eutheria</taxon>
        <taxon>Euarchontoglires</taxon>
        <taxon>Primates</taxon>
        <taxon>Haplorrhini</taxon>
        <taxon>Catarrhini</taxon>
        <taxon>Hominidae</taxon>
        <taxon>Homo</taxon>
    </lineage>
</organism>
<proteinExistence type="uncertain"/>
<reference key="1">
    <citation type="journal article" date="2003" name="Biochem. Biophys. Res. Commun.">
        <title>There exist at least 30 human G-protein-coupled receptors with long Ser/Thr-rich N-termini.</title>
        <authorList>
            <person name="Fredriksson R."/>
            <person name="Gloriam D.E.I."/>
            <person name="Hoeglund P.J."/>
            <person name="Lagerstroem M.C."/>
            <person name="Schioeth H.B."/>
        </authorList>
    </citation>
    <scope>NUCLEOTIDE SEQUENCE [MRNA] (ISOFORM 1)</scope>
</reference>
<reference key="2">
    <citation type="journal article" date="2003" name="Eur. J. Immunol.">
        <title>Inactivation of the EGF-TM7 receptor EMR4 after the Pan-Homo divergence.</title>
        <authorList>
            <person name="Hamann J."/>
            <person name="Kwakkenbos M.J."/>
            <person name="de Jong E.C."/>
            <person name="Heus H."/>
            <person name="Olsen A.S."/>
            <person name="van Lier R.A.W."/>
        </authorList>
    </citation>
    <scope>NUCLEOTIDE SEQUENCE [MRNA] (ISOFORM 2)</scope>
</reference>
<reference key="3">
    <citation type="journal article" date="2003" name="Proc. Natl. Acad. Sci. U.S.A.">
        <title>The G protein-coupled receptor repertoires of human and mouse.</title>
        <authorList>
            <person name="Vassilatis D.K."/>
            <person name="Hohmann J.G."/>
            <person name="Zeng H."/>
            <person name="Li F."/>
            <person name="Ranchalis J.E."/>
            <person name="Mortrud M.T."/>
            <person name="Brown A."/>
            <person name="Rodriguez S.S."/>
            <person name="Weller J.R."/>
            <person name="Wright A.C."/>
            <person name="Bergmann J.E."/>
            <person name="Gaitanaris G.A."/>
        </authorList>
    </citation>
    <scope>NUCLEOTIDE SEQUENCE [LARGE SCALE MRNA] OF 262-310</scope>
</reference>
<reference key="4">
    <citation type="journal article" date="2006" name="DNA Seq.">
        <title>Gene structure and transcript analysis of the human and mouse EGF-TM7 molecule, FIRE.</title>
        <authorList>
            <person name="Caminschi I."/>
            <person name="Vandenabeele S."/>
            <person name="Sofi M."/>
            <person name="McKnight A.J."/>
            <person name="Ward N."/>
            <person name="Brodnicki T.C."/>
            <person name="Toy T."/>
            <person name="Lahoud M."/>
            <person name="Maraskovsky E."/>
            <person name="Shortman K."/>
            <person name="Wright M.D."/>
        </authorList>
    </citation>
    <scope>NUCLEOTIDE SEQUENCE [MRNA] (ISOFORM 2)</scope>
</reference>
<reference key="5">
    <citation type="journal article" date="2015" name="Pharmacol. Rev.">
        <title>International union of basic and clinical pharmacology. XCIV. Adhesion G protein-coupled receptors.</title>
        <authorList>
            <person name="Hamann J."/>
            <person name="Aust G."/>
            <person name="Arac D."/>
            <person name="Engel F.B."/>
            <person name="Formstone C."/>
            <person name="Fredriksson R."/>
            <person name="Hall R.A."/>
            <person name="Harty B.L."/>
            <person name="Kirchhoff C."/>
            <person name="Knapp B."/>
            <person name="Krishnan A."/>
            <person name="Liebscher I."/>
            <person name="Lin H.H."/>
            <person name="Martinelli D.C."/>
            <person name="Monk K.R."/>
            <person name="Peeters M.C."/>
            <person name="Piao X."/>
            <person name="Promel S."/>
            <person name="Schoneberg T."/>
            <person name="Schwartz T.W."/>
            <person name="Singer K."/>
            <person name="Stacey M."/>
            <person name="Ushkaryov Y.A."/>
            <person name="Vallon M."/>
            <person name="Wolfrum U."/>
            <person name="Wright M.W."/>
            <person name="Xu L."/>
            <person name="Langenhan T."/>
            <person name="Schioth H.B."/>
        </authorList>
    </citation>
    <scope>NOMENCLATURE</scope>
</reference>
<name>AGRE4_HUMAN</name>
<feature type="signal peptide" evidence="2">
    <location>
        <begin position="1"/>
        <end position="14"/>
    </location>
</feature>
<feature type="chain" id="PRO_0000012877" description="Putative adhesion G protein-coupled receptor E4P">
    <location>
        <begin position="15"/>
        <end position="457"/>
    </location>
</feature>
<feature type="topological domain" description="Extracellular" evidence="2">
    <location>
        <begin position="16"/>
        <end position="191"/>
    </location>
</feature>
<feature type="transmembrane region" description="Helical; Name=1" evidence="2">
    <location>
        <begin position="192"/>
        <end position="212"/>
    </location>
</feature>
<feature type="topological domain" description="Cytoplasmic" evidence="2">
    <location>
        <begin position="213"/>
        <end position="223"/>
    </location>
</feature>
<feature type="transmembrane region" description="Helical; Name=2" evidence="2">
    <location>
        <begin position="224"/>
        <end position="244"/>
    </location>
</feature>
<feature type="topological domain" description="Extracellular" evidence="2">
    <location>
        <begin position="245"/>
        <end position="250"/>
    </location>
</feature>
<feature type="transmembrane region" description="Helical; Name=3" evidence="2">
    <location>
        <begin position="251"/>
        <end position="271"/>
    </location>
</feature>
<feature type="topological domain" description="Cytoplasmic" evidence="2">
    <location>
        <begin position="272"/>
        <end position="299"/>
    </location>
</feature>
<feature type="transmembrane region" description="Helical; Name=4" evidence="2">
    <location>
        <begin position="300"/>
        <end position="320"/>
    </location>
</feature>
<feature type="topological domain" description="Extracellular" evidence="2">
    <location>
        <begin position="321"/>
        <end position="336"/>
    </location>
</feature>
<feature type="transmembrane region" description="Helical; Name=5" evidence="2">
    <location>
        <begin position="337"/>
        <end position="357"/>
    </location>
</feature>
<feature type="topological domain" description="Cytoplasmic" evidence="2">
    <location>
        <begin position="358"/>
        <end position="384"/>
    </location>
</feature>
<feature type="transmembrane region" description="Helical; Name=6" evidence="2">
    <location>
        <begin position="385"/>
        <end position="405"/>
    </location>
</feature>
<feature type="topological domain" description="Extracellular" evidence="2">
    <location>
        <begin position="406"/>
        <end position="413"/>
    </location>
</feature>
<feature type="transmembrane region" description="Helical; Name=7" evidence="2">
    <location>
        <begin position="414"/>
        <end position="434"/>
    </location>
</feature>
<feature type="topological domain" description="Cytoplasmic" evidence="2">
    <location>
        <begin position="435"/>
        <end position="457"/>
    </location>
</feature>
<feature type="domain" description="EGF-like 1" evidence="3">
    <location>
        <begin position="15"/>
        <end position="53"/>
    </location>
</feature>
<feature type="domain" description="EGF-like 2; calcium-binding" evidence="3">
    <location>
        <begin position="54"/>
        <end position="104"/>
    </location>
</feature>
<feature type="domain" description="GAIN-B" evidence="4">
    <location>
        <begin position="134"/>
        <end position="186"/>
    </location>
</feature>
<feature type="region of interest" description="GPS" evidence="4">
    <location>
        <begin position="141"/>
        <end position="186"/>
    </location>
</feature>
<feature type="site" description="Cleavage; by autolysis" evidence="4">
    <location>
        <begin position="173"/>
        <end position="174"/>
    </location>
</feature>
<feature type="glycosylation site" description="N-linked (GlcNAc...) asparagine" evidence="2">
    <location>
        <position position="26"/>
    </location>
</feature>
<feature type="glycosylation site" description="N-linked (GlcNAc...) asparagine" evidence="2">
    <location>
        <position position="106"/>
    </location>
</feature>
<feature type="glycosylation site" description="N-linked (GlcNAc...) asparagine" evidence="2">
    <location>
        <position position="162"/>
    </location>
</feature>
<feature type="glycosylation site" description="N-linked (GlcNAc...) asparagine" evidence="2">
    <location>
        <position position="245"/>
    </location>
</feature>
<feature type="disulfide bond" evidence="3">
    <location>
        <begin position="15"/>
        <end position="24"/>
    </location>
</feature>
<feature type="disulfide bond" evidence="3">
    <location>
        <begin position="18"/>
        <end position="30"/>
    </location>
</feature>
<feature type="disulfide bond" evidence="3">
    <location>
        <begin position="32"/>
        <end position="52"/>
    </location>
</feature>
<feature type="disulfide bond" evidence="3">
    <location>
        <begin position="58"/>
        <end position="71"/>
    </location>
</feature>
<feature type="disulfide bond" evidence="3">
    <location>
        <begin position="65"/>
        <end position="80"/>
    </location>
</feature>
<feature type="disulfide bond" evidence="3">
    <location>
        <begin position="82"/>
        <end position="103"/>
    </location>
</feature>
<feature type="disulfide bond" evidence="4">
    <location>
        <begin position="141"/>
        <end position="168"/>
    </location>
</feature>
<feature type="disulfide bond" evidence="4">
    <location>
        <begin position="156"/>
        <end position="170"/>
    </location>
</feature>
<feature type="splice variant" id="VSP_057755" description="In isoform 2." evidence="5 6">
    <original>G</original>
    <variation>GLTVLLALPGSEAKNSG</variation>
    <location>
        <position position="12"/>
    </location>
</feature>
<feature type="splice variant" id="VSP_057756" description="In isoform 2." evidence="5 6">
    <original>VSGVKPGFGKQLPGDKRTKHICVYWEGSEGGWSTEGCSHVHSNGSYTKCKCFHLSSFAVLVALAPKEDPVLTVITQVGLTISLLCLFLAILTFLLCR</original>
    <variation>ENLRRNGSREDFARRATQLIQSVELSIWNASFASPGKGQISEFDIVYETKRCNETRENAFLEAGNNTMDINCADALKGNLRESTAVALSLINLLGIF</variation>
    <location>
        <begin position="120"/>
        <end position="216"/>
    </location>
</feature>
<feature type="splice variant" id="VSP_057757" description="In isoform 2." evidence="5 6">
    <location>
        <begin position="217"/>
        <end position="457"/>
    </location>
</feature>
<sequence length="457" mass="50903">MGSRFLLVLLSGASCPPCPKYASCHNSTHCTCEDGFRARSGRTYFHDSSEKCEDINECETGLAKCKYKAYCRNKVGGYICSCLVKYTLFNFLAGIIDYDHPDCYENNSQGTTQSNVDIWVSGVKPGFGKQLPGDKRTKHICVYWEGSEGGWSTEGCSHVHSNGSYTKCKCFHLSSFAVLVALAPKEDPVLTVITQVGLTISLLCLFLAILTFLLCRPIQNTSTSLHLELSLCLFLAHLLFLTGINRTEPEVLCSIIAGLLHFLYLACFTWMLLEGLHLFLTVRNLKVANYTSTGRFKKRFMYPVGYGIPAVIIAVSAIVGPQNYGTFTCWLKLDKGFIWSFMGPVAVIILINLVFYFQVLWILRSKLSSLNKEVSTIQDTRVMTFKAISQLFILGCSWGLGFFMVEEVGKTIGSIIAYSFTIINTLQGVLLFVVHCLLNRQVRLIILSVISLVPKSN</sequence>
<accession>Q86SQ3</accession>
<accession>Q86SP1</accession>
<dbReference type="EMBL" id="AY181245">
    <property type="protein sequence ID" value="AAO27357.1"/>
    <property type="molecule type" value="mRNA"/>
</dbReference>
<dbReference type="EMBL" id="AF489700">
    <property type="status" value="NOT_ANNOTATED_CDS"/>
    <property type="molecule type" value="mRNA"/>
</dbReference>
<dbReference type="EMBL" id="AY255550">
    <property type="protein sequence ID" value="AAO85062.1"/>
    <property type="molecule type" value="mRNA"/>
</dbReference>
<dbReference type="SMR" id="Q86SQ3"/>
<dbReference type="FunCoup" id="Q86SQ3">
    <property type="interactions" value="59"/>
</dbReference>
<dbReference type="MEROPS" id="P02.005"/>
<dbReference type="GlyCosmos" id="Q86SQ3">
    <property type="glycosylation" value="4 sites, No reported glycans"/>
</dbReference>
<dbReference type="GlyGen" id="Q86SQ3">
    <property type="glycosylation" value="5 sites, 1 O-linked glycan (1 site)"/>
</dbReference>
<dbReference type="iPTMnet" id="Q86SQ3"/>
<dbReference type="PhosphoSitePlus" id="Q86SQ3"/>
<dbReference type="BioMuta" id="HGNC:19240"/>
<dbReference type="DMDM" id="44887876"/>
<dbReference type="MassIVE" id="Q86SQ3"/>
<dbReference type="AGR" id="HGNC:19240"/>
<dbReference type="GeneCards" id="ADGRE4P"/>
<dbReference type="HGNC" id="HGNC:19240">
    <property type="gene designation" value="ADGRE4P"/>
</dbReference>
<dbReference type="neXtProt" id="NX_Q86SQ3"/>
<dbReference type="InParanoid" id="Q86SQ3"/>
<dbReference type="PAN-GO" id="Q86SQ3">
    <property type="GO annotations" value="3 GO annotations based on evolutionary models"/>
</dbReference>
<dbReference type="PhylomeDB" id="Q86SQ3"/>
<dbReference type="PathwayCommons" id="Q86SQ3"/>
<dbReference type="Pharos" id="Q86SQ3">
    <property type="development level" value="Tdark"/>
</dbReference>
<dbReference type="Proteomes" id="UP000005640">
    <property type="component" value="Unplaced"/>
</dbReference>
<dbReference type="RNAct" id="Q86SQ3">
    <property type="molecule type" value="protein"/>
</dbReference>
<dbReference type="GO" id="GO:0005576">
    <property type="term" value="C:extracellular region"/>
    <property type="evidence" value="ECO:0007669"/>
    <property type="project" value="UniProtKB-SubCell"/>
</dbReference>
<dbReference type="GO" id="GO:0016020">
    <property type="term" value="C:membrane"/>
    <property type="evidence" value="ECO:0000304"/>
    <property type="project" value="GDB"/>
</dbReference>
<dbReference type="GO" id="GO:0005886">
    <property type="term" value="C:plasma membrane"/>
    <property type="evidence" value="ECO:0000318"/>
    <property type="project" value="GO_Central"/>
</dbReference>
<dbReference type="GO" id="GO:0005509">
    <property type="term" value="F:calcium ion binding"/>
    <property type="evidence" value="ECO:0007669"/>
    <property type="project" value="InterPro"/>
</dbReference>
<dbReference type="GO" id="GO:0004930">
    <property type="term" value="F:G protein-coupled receptor activity"/>
    <property type="evidence" value="ECO:0000318"/>
    <property type="project" value="GO_Central"/>
</dbReference>
<dbReference type="GO" id="GO:0007189">
    <property type="term" value="P:adenylate cyclase-activating G protein-coupled receptor signaling pathway"/>
    <property type="evidence" value="ECO:0000318"/>
    <property type="project" value="GO_Central"/>
</dbReference>
<dbReference type="GO" id="GO:0007166">
    <property type="term" value="P:cell surface receptor signaling pathway"/>
    <property type="evidence" value="ECO:0007669"/>
    <property type="project" value="InterPro"/>
</dbReference>
<dbReference type="GO" id="GO:0007186">
    <property type="term" value="P:G protein-coupled receptor signaling pathway"/>
    <property type="evidence" value="ECO:0000304"/>
    <property type="project" value="GDB"/>
</dbReference>
<dbReference type="CDD" id="cd15439">
    <property type="entry name" value="7tmB2_EMR"/>
    <property type="match status" value="1"/>
</dbReference>
<dbReference type="CDD" id="cd00054">
    <property type="entry name" value="EGF_CA"/>
    <property type="match status" value="1"/>
</dbReference>
<dbReference type="FunFam" id="2.10.25.10:FF:000177">
    <property type="entry name" value="Adhesion G protein-coupled receptor E2"/>
    <property type="match status" value="1"/>
</dbReference>
<dbReference type="FunFam" id="1.20.1070.10:FF:000054">
    <property type="entry name" value="Adhesion G protein-coupled receptor E3"/>
    <property type="match status" value="1"/>
</dbReference>
<dbReference type="FunFam" id="2.10.25.10:FF:000750">
    <property type="entry name" value="Putative adhesion G protein-coupled receptor E4P"/>
    <property type="match status" value="1"/>
</dbReference>
<dbReference type="FunFam" id="2.60.220.50:FF:000102">
    <property type="entry name" value="Putative adhesion G protein-coupled receptor E4P"/>
    <property type="match status" value="1"/>
</dbReference>
<dbReference type="Gene3D" id="2.60.220.50">
    <property type="match status" value="1"/>
</dbReference>
<dbReference type="Gene3D" id="2.10.25.10">
    <property type="entry name" value="Laminin"/>
    <property type="match status" value="2"/>
</dbReference>
<dbReference type="Gene3D" id="1.20.1070.10">
    <property type="entry name" value="Rhodopsin 7-helix transmembrane proteins"/>
    <property type="match status" value="1"/>
</dbReference>
<dbReference type="InterPro" id="IPR001881">
    <property type="entry name" value="EGF-like_Ca-bd_dom"/>
</dbReference>
<dbReference type="InterPro" id="IPR000742">
    <property type="entry name" value="EGF-like_dom"/>
</dbReference>
<dbReference type="InterPro" id="IPR000152">
    <property type="entry name" value="EGF-type_Asp/Asn_hydroxyl_site"/>
</dbReference>
<dbReference type="InterPro" id="IPR018097">
    <property type="entry name" value="EGF_Ca-bd_CS"/>
</dbReference>
<dbReference type="InterPro" id="IPR057244">
    <property type="entry name" value="GAIN_B"/>
</dbReference>
<dbReference type="InterPro" id="IPR046338">
    <property type="entry name" value="GAIN_dom_sf"/>
</dbReference>
<dbReference type="InterPro" id="IPR017981">
    <property type="entry name" value="GPCR_2-like_7TM"/>
</dbReference>
<dbReference type="InterPro" id="IPR001740">
    <property type="entry name" value="GPCR_2_EMR1-like_rcpt"/>
</dbReference>
<dbReference type="InterPro" id="IPR000832">
    <property type="entry name" value="GPCR_2_secretin-like"/>
</dbReference>
<dbReference type="InterPro" id="IPR017983">
    <property type="entry name" value="GPCR_2_secretin-like_CS"/>
</dbReference>
<dbReference type="InterPro" id="IPR000203">
    <property type="entry name" value="GPS"/>
</dbReference>
<dbReference type="InterPro" id="IPR049883">
    <property type="entry name" value="NOTCH1_EGF-like"/>
</dbReference>
<dbReference type="PANTHER" id="PTHR12011:SF473">
    <property type="entry name" value="ADHESION G PROTEIN-COUPLED RECEPTOR E4P-RELATED"/>
    <property type="match status" value="1"/>
</dbReference>
<dbReference type="PANTHER" id="PTHR12011">
    <property type="entry name" value="ADHESION G-PROTEIN COUPLED RECEPTOR"/>
    <property type="match status" value="1"/>
</dbReference>
<dbReference type="Pfam" id="PF00002">
    <property type="entry name" value="7tm_2"/>
    <property type="match status" value="1"/>
</dbReference>
<dbReference type="Pfam" id="PF07645">
    <property type="entry name" value="EGF_CA"/>
    <property type="match status" value="1"/>
</dbReference>
<dbReference type="Pfam" id="PF01825">
    <property type="entry name" value="GPS"/>
    <property type="match status" value="1"/>
</dbReference>
<dbReference type="PRINTS" id="PR01128">
    <property type="entry name" value="EMR1HORMONER"/>
</dbReference>
<dbReference type="PRINTS" id="PR00249">
    <property type="entry name" value="GPCRSECRETIN"/>
</dbReference>
<dbReference type="SMART" id="SM00179">
    <property type="entry name" value="EGF_CA"/>
    <property type="match status" value="1"/>
</dbReference>
<dbReference type="SMART" id="SM00303">
    <property type="entry name" value="GPS"/>
    <property type="match status" value="1"/>
</dbReference>
<dbReference type="SUPFAM" id="SSF57196">
    <property type="entry name" value="EGF/Laminin"/>
    <property type="match status" value="1"/>
</dbReference>
<dbReference type="PROSITE" id="PS00010">
    <property type="entry name" value="ASX_HYDROXYL"/>
    <property type="match status" value="1"/>
</dbReference>
<dbReference type="PROSITE" id="PS50026">
    <property type="entry name" value="EGF_3"/>
    <property type="match status" value="1"/>
</dbReference>
<dbReference type="PROSITE" id="PS01187">
    <property type="entry name" value="EGF_CA"/>
    <property type="match status" value="1"/>
</dbReference>
<dbReference type="PROSITE" id="PS00650">
    <property type="entry name" value="G_PROTEIN_RECEP_F2_2"/>
    <property type="match status" value="1"/>
</dbReference>
<dbReference type="PROSITE" id="PS50261">
    <property type="entry name" value="G_PROTEIN_RECEP_F2_4"/>
    <property type="match status" value="1"/>
</dbReference>
<dbReference type="PROSITE" id="PS50221">
    <property type="entry name" value="GAIN_B"/>
    <property type="match status" value="1"/>
</dbReference>
<gene>
    <name evidence="10" type="primary">ADGRE4P</name>
    <name type="synonym">EMR4</name>
    <name type="synonym">EMR4P</name>
    <name type="synonym">GPR127</name>
    <name type="synonym">PGR16</name>
</gene>
<keyword id="KW-0025">Alternative splicing</keyword>
<keyword id="KW-0106">Calcium</keyword>
<keyword id="KW-1003">Cell membrane</keyword>
<keyword id="KW-1015">Disulfide bond</keyword>
<keyword id="KW-0245">EGF-like domain</keyword>
<keyword id="KW-0297">G-protein coupled receptor</keyword>
<keyword id="KW-0325">Glycoprotein</keyword>
<keyword id="KW-0472">Membrane</keyword>
<keyword id="KW-0675">Receptor</keyword>
<keyword id="KW-1185">Reference proteome</keyword>
<keyword id="KW-0677">Repeat</keyword>
<keyword id="KW-0964">Secreted</keyword>
<keyword id="KW-0732">Signal</keyword>
<keyword id="KW-0807">Transducer</keyword>
<keyword id="KW-0812">Transmembrane</keyword>
<keyword id="KW-1133">Transmembrane helix</keyword>
<comment type="function">
    <text evidence="1">May mediate the cellular interaction between myeloid cells and B-cells.</text>
</comment>
<comment type="subunit">
    <text evidence="1">Forms a heterodimer, consisting of a large extracellular region (alpha subunit) non-covalently linked to a seven-transmembrane moiety (beta subunit).</text>
</comment>
<comment type="subcellular location">
    <molecule>Isoform 1</molecule>
    <subcellularLocation>
        <location evidence="1">Cell membrane</location>
        <topology evidence="7">Multi-pass membrane protein</topology>
    </subcellularLocation>
</comment>
<comment type="subcellular location">
    <molecule>Isoform 2</molecule>
    <subcellularLocation>
        <location evidence="7">Secreted</location>
    </subcellularLocation>
</comment>
<comment type="alternative products">
    <event type="alternative splicing"/>
    <isoform>
        <id>Q86SQ3-1</id>
        <name>1</name>
        <sequence type="displayed"/>
    </isoform>
    <isoform>
        <id>Q86SQ3-2</id>
        <name>2</name>
        <sequence type="described" ref="VSP_057755 VSP_057756 VSP_057757"/>
    </isoform>
</comment>
<comment type="PTM">
    <text evidence="1">Glycosylated.</text>
</comment>
<comment type="PTM">
    <text evidence="1">Proteolytically cleaved into 2 subunits, an extracellular alpha subunit and a seven-transmembrane subunit.</text>
</comment>
<comment type="miscellaneous">
    <molecule>Isoform 2</molecule>
    <text evidence="7">Due to a frameshift mutation in exon 8 would result in a truncated soluble form.</text>
</comment>
<comment type="similarity">
    <text evidence="7">Belongs to the G-protein coupled receptor 2 family. Adhesion G-protein coupled receptor (ADGR) subfamily.</text>
</comment>
<comment type="caution">
    <text evidence="8 9">Could be the product of a pseudogene. A point deletion in exon 8, which introduces a frame shift leading to a premature stop codon. Thus, a protein expressed by this gene would be soluble rather than expressed on the cell surface. This single-nucleotide deletion has been acquired after human-chimpanzee speciation, about five million years ago.</text>
</comment>